<organism>
    <name type="scientific">Brucella melitensis biotype 2 (strain ATCC 23457)</name>
    <dbReference type="NCBI Taxonomy" id="546272"/>
    <lineage>
        <taxon>Bacteria</taxon>
        <taxon>Pseudomonadati</taxon>
        <taxon>Pseudomonadota</taxon>
        <taxon>Alphaproteobacteria</taxon>
        <taxon>Hyphomicrobiales</taxon>
        <taxon>Brucellaceae</taxon>
        <taxon>Brucella/Ochrobactrum group</taxon>
        <taxon>Brucella</taxon>
    </lineage>
</organism>
<keyword id="KW-0028">Amino-acid biosynthesis</keyword>
<keyword id="KW-0067">ATP-binding</keyword>
<keyword id="KW-0963">Cytoplasm</keyword>
<keyword id="KW-0368">Histidine biosynthesis</keyword>
<keyword id="KW-0378">Hydrolase</keyword>
<keyword id="KW-0547">Nucleotide-binding</keyword>
<protein>
    <recommendedName>
        <fullName evidence="1">Phosphoribosyl-ATP pyrophosphatase</fullName>
        <shortName evidence="1">PRA-PH</shortName>
        <ecNumber evidence="1">3.6.1.31</ecNumber>
    </recommendedName>
</protein>
<name>HIS2_BRUMB</name>
<sequence>MSQFTLADLERIVAERASVTDGTSYTASLVAKGQPKAAQKLGEEAVETVIAAVSGDRAGVVSESADLLYHLAVVWNIAGVALEDVLQELQRRTAQTGLAEKASRPKG</sequence>
<dbReference type="EC" id="3.6.1.31" evidence="1"/>
<dbReference type="EMBL" id="CP001488">
    <property type="protein sequence ID" value="ACO01796.1"/>
    <property type="molecule type" value="Genomic_DNA"/>
</dbReference>
<dbReference type="RefSeq" id="WP_002965152.1">
    <property type="nucleotide sequence ID" value="NC_012441.1"/>
</dbReference>
<dbReference type="SMR" id="C0RFX4"/>
<dbReference type="KEGG" id="bmi:BMEA_A2148"/>
<dbReference type="HOGENOM" id="CLU_123337_1_1_5"/>
<dbReference type="UniPathway" id="UPA00031">
    <property type="reaction ID" value="UER00007"/>
</dbReference>
<dbReference type="Proteomes" id="UP000001748">
    <property type="component" value="Chromosome I"/>
</dbReference>
<dbReference type="GO" id="GO:0005737">
    <property type="term" value="C:cytoplasm"/>
    <property type="evidence" value="ECO:0007669"/>
    <property type="project" value="UniProtKB-SubCell"/>
</dbReference>
<dbReference type="GO" id="GO:0005524">
    <property type="term" value="F:ATP binding"/>
    <property type="evidence" value="ECO:0007669"/>
    <property type="project" value="UniProtKB-KW"/>
</dbReference>
<dbReference type="GO" id="GO:0004636">
    <property type="term" value="F:phosphoribosyl-ATP diphosphatase activity"/>
    <property type="evidence" value="ECO:0007669"/>
    <property type="project" value="UniProtKB-UniRule"/>
</dbReference>
<dbReference type="GO" id="GO:0000105">
    <property type="term" value="P:L-histidine biosynthetic process"/>
    <property type="evidence" value="ECO:0007669"/>
    <property type="project" value="UniProtKB-UniRule"/>
</dbReference>
<dbReference type="CDD" id="cd11534">
    <property type="entry name" value="NTP-PPase_HisIE_like"/>
    <property type="match status" value="1"/>
</dbReference>
<dbReference type="Gene3D" id="1.10.287.1080">
    <property type="entry name" value="MazG-like"/>
    <property type="match status" value="1"/>
</dbReference>
<dbReference type="HAMAP" id="MF_01020">
    <property type="entry name" value="HisE"/>
    <property type="match status" value="1"/>
</dbReference>
<dbReference type="InterPro" id="IPR008179">
    <property type="entry name" value="HisE"/>
</dbReference>
<dbReference type="InterPro" id="IPR021130">
    <property type="entry name" value="PRib-ATP_PPHydrolase-like"/>
</dbReference>
<dbReference type="NCBIfam" id="TIGR03188">
    <property type="entry name" value="histidine_hisI"/>
    <property type="match status" value="1"/>
</dbReference>
<dbReference type="NCBIfam" id="NF001613">
    <property type="entry name" value="PRK00400.1-5"/>
    <property type="match status" value="1"/>
</dbReference>
<dbReference type="PANTHER" id="PTHR42945">
    <property type="entry name" value="HISTIDINE BIOSYNTHESIS BIFUNCTIONAL PROTEIN"/>
    <property type="match status" value="1"/>
</dbReference>
<dbReference type="PANTHER" id="PTHR42945:SF9">
    <property type="entry name" value="HISTIDINE BIOSYNTHESIS BIFUNCTIONAL PROTEIN HISIE"/>
    <property type="match status" value="1"/>
</dbReference>
<dbReference type="Pfam" id="PF01503">
    <property type="entry name" value="PRA-PH"/>
    <property type="match status" value="1"/>
</dbReference>
<dbReference type="SUPFAM" id="SSF101386">
    <property type="entry name" value="all-alpha NTP pyrophosphatases"/>
    <property type="match status" value="1"/>
</dbReference>
<feature type="chain" id="PRO_1000149049" description="Phosphoribosyl-ATP pyrophosphatase">
    <location>
        <begin position="1"/>
        <end position="107"/>
    </location>
</feature>
<proteinExistence type="inferred from homology"/>
<evidence type="ECO:0000255" key="1">
    <source>
        <dbReference type="HAMAP-Rule" id="MF_01020"/>
    </source>
</evidence>
<comment type="catalytic activity">
    <reaction evidence="1">
        <text>1-(5-phospho-beta-D-ribosyl)-ATP + H2O = 1-(5-phospho-beta-D-ribosyl)-5'-AMP + diphosphate + H(+)</text>
        <dbReference type="Rhea" id="RHEA:22828"/>
        <dbReference type="ChEBI" id="CHEBI:15377"/>
        <dbReference type="ChEBI" id="CHEBI:15378"/>
        <dbReference type="ChEBI" id="CHEBI:33019"/>
        <dbReference type="ChEBI" id="CHEBI:59457"/>
        <dbReference type="ChEBI" id="CHEBI:73183"/>
        <dbReference type="EC" id="3.6.1.31"/>
    </reaction>
</comment>
<comment type="pathway">
    <text evidence="1">Amino-acid biosynthesis; L-histidine biosynthesis; L-histidine from 5-phospho-alpha-D-ribose 1-diphosphate: step 2/9.</text>
</comment>
<comment type="subcellular location">
    <subcellularLocation>
        <location evidence="1">Cytoplasm</location>
    </subcellularLocation>
</comment>
<comment type="similarity">
    <text evidence="1">Belongs to the PRA-PH family.</text>
</comment>
<accession>C0RFX4</accession>
<gene>
    <name evidence="1" type="primary">hisE</name>
    <name type="ordered locus">BMEA_A2148</name>
</gene>
<reference key="1">
    <citation type="submission" date="2009-03" db="EMBL/GenBank/DDBJ databases">
        <title>Brucella melitensis ATCC 23457 whole genome shotgun sequencing project.</title>
        <authorList>
            <person name="Setubal J.C."/>
            <person name="Boyle S."/>
            <person name="Crasta O.R."/>
            <person name="Gillespie J.J."/>
            <person name="Kenyon R.W."/>
            <person name="Lu J."/>
            <person name="Mane S."/>
            <person name="Nagrani S."/>
            <person name="Shallom J.M."/>
            <person name="Shallom S."/>
            <person name="Shukla M."/>
            <person name="Snyder E.E."/>
            <person name="Sobral B.W."/>
            <person name="Wattam A.R."/>
            <person name="Will R."/>
            <person name="Williams K."/>
            <person name="Yoo H."/>
            <person name="Munk C."/>
            <person name="Tapia R."/>
            <person name="Han C."/>
            <person name="Detter J.C."/>
            <person name="Bruce D."/>
            <person name="Brettin T.S."/>
        </authorList>
    </citation>
    <scope>NUCLEOTIDE SEQUENCE [LARGE SCALE GENOMIC DNA]</scope>
    <source>
        <strain>ATCC 23457</strain>
    </source>
</reference>